<evidence type="ECO:0000250" key="1">
    <source>
        <dbReference type="UniProtKB" id="Q12926"/>
    </source>
</evidence>
<evidence type="ECO:0000250" key="2">
    <source>
        <dbReference type="UniProtKB" id="Q60899"/>
    </source>
</evidence>
<evidence type="ECO:0000255" key="3">
    <source>
        <dbReference type="PROSITE-ProRule" id="PRU00176"/>
    </source>
</evidence>
<evidence type="ECO:0000256" key="4">
    <source>
        <dbReference type="SAM" id="MobiDB-lite"/>
    </source>
</evidence>
<evidence type="ECO:0000305" key="5"/>
<evidence type="ECO:0007744" key="6">
    <source>
    </source>
</evidence>
<reference key="1">
    <citation type="submission" date="2002-12" db="EMBL/GenBank/DDBJ databases">
        <title>Cloning of rat HuB transcript with poly-A 3' tail.</title>
        <authorList>
            <person name="Mori R."/>
            <person name="Suda H."/>
            <person name="Suzuki G."/>
            <person name="Wakizono T."/>
            <person name="Kuwahara T."/>
            <person name="Suda S."/>
            <person name="Nibuya M."/>
            <person name="Nomura S."/>
        </authorList>
    </citation>
    <scope>NUCLEOTIDE SEQUENCE [MRNA]</scope>
    <source>
        <strain>Sprague-Dawley</strain>
        <tissue>Brain</tissue>
    </source>
</reference>
<reference key="2">
    <citation type="journal article" date="2012" name="Nat. Commun.">
        <title>Quantitative maps of protein phosphorylation sites across 14 different rat organs and tissues.</title>
        <authorList>
            <person name="Lundby A."/>
            <person name="Secher A."/>
            <person name="Lage K."/>
            <person name="Nordsborg N.B."/>
            <person name="Dmytriyev A."/>
            <person name="Lundby C."/>
            <person name="Olsen J.V."/>
        </authorList>
    </citation>
    <scope>PHOSPHORYLATION [LARGE SCALE ANALYSIS] AT SER-221</scope>
    <scope>IDENTIFICATION BY MASS SPECTROMETRY [LARGE SCALE ANALYSIS]</scope>
</reference>
<name>ELAV2_RAT</name>
<accession>Q8CH84</accession>
<sequence length="359" mass="39506">METQLSNGPTCNNTANGPTTVNNNCSSPVDSGNTEDSKTNLIDNYLPQNMTQEELKSLFGSIGEIESCKLVRDKITGQSLGYGFVNYIDPKDAEKAINTLNGLRLQTKTIKVSYARPSSASIRDANLYVSGLPKTMTQKELEQLFSQYGRIITSRILVDQVTGISRGVGFIRFDKRIEAEEAIKGLNGQKPPGATEPITVKFANNPSQKTNQAILSQLYQSPNRRYPGPLAQQAQRFRLDNLLNMAYGVKRFSPMTIDGMTSLAGINIPGHPGTGWCIFVYNLAPDADESILWQMFGPFGAVTNVKVIRDFNTNKCKGFGFVTMTNYDEAAMAIASLNGYRLGDRVLQVSFKTNKTHKA</sequence>
<dbReference type="EMBL" id="AB098713">
    <property type="protein sequence ID" value="BAC53775.1"/>
    <property type="molecule type" value="mRNA"/>
</dbReference>
<dbReference type="SMR" id="Q8CH84"/>
<dbReference type="FunCoup" id="Q8CH84">
    <property type="interactions" value="2035"/>
</dbReference>
<dbReference type="IntAct" id="Q8CH84">
    <property type="interactions" value="1"/>
</dbReference>
<dbReference type="MINT" id="Q8CH84"/>
<dbReference type="iPTMnet" id="Q8CH84"/>
<dbReference type="PhosphoSitePlus" id="Q8CH84"/>
<dbReference type="jPOST" id="Q8CH84"/>
<dbReference type="PaxDb" id="10116-ENSRNOP00000009034"/>
<dbReference type="UCSC" id="RGD:628611">
    <property type="organism name" value="rat"/>
</dbReference>
<dbReference type="AGR" id="RGD:628611"/>
<dbReference type="RGD" id="628611">
    <property type="gene designation" value="Elavl2"/>
</dbReference>
<dbReference type="eggNOG" id="KOG0145">
    <property type="taxonomic scope" value="Eukaryota"/>
</dbReference>
<dbReference type="InParanoid" id="Q8CH84"/>
<dbReference type="PhylomeDB" id="Q8CH84"/>
<dbReference type="PRO" id="PR:Q8CH84"/>
<dbReference type="Proteomes" id="UP000002494">
    <property type="component" value="Unplaced"/>
</dbReference>
<dbReference type="GO" id="GO:0150048">
    <property type="term" value="C:cerebellar granule cell to Purkinje cell synapse"/>
    <property type="evidence" value="ECO:0000314"/>
    <property type="project" value="SynGO"/>
</dbReference>
<dbReference type="GO" id="GO:1990904">
    <property type="term" value="C:ribonucleoprotein complex"/>
    <property type="evidence" value="ECO:0007669"/>
    <property type="project" value="InterPro"/>
</dbReference>
<dbReference type="GO" id="GO:0045202">
    <property type="term" value="C:synapse"/>
    <property type="evidence" value="ECO:0000266"/>
    <property type="project" value="RGD"/>
</dbReference>
<dbReference type="GO" id="GO:0003723">
    <property type="term" value="F:RNA binding"/>
    <property type="evidence" value="ECO:0007669"/>
    <property type="project" value="UniProtKB-KW"/>
</dbReference>
<dbReference type="GO" id="GO:1990830">
    <property type="term" value="P:cellular response to leukemia inhibitory factor"/>
    <property type="evidence" value="ECO:0000266"/>
    <property type="project" value="RGD"/>
</dbReference>
<dbReference type="GO" id="GO:0051963">
    <property type="term" value="P:regulation of synapse assembly"/>
    <property type="evidence" value="ECO:0000314"/>
    <property type="project" value="SynGO"/>
</dbReference>
<dbReference type="CDD" id="cd12775">
    <property type="entry name" value="RRM2_HuB"/>
    <property type="match status" value="1"/>
</dbReference>
<dbReference type="CDD" id="cd12654">
    <property type="entry name" value="RRM3_HuB"/>
    <property type="match status" value="1"/>
</dbReference>
<dbReference type="FunFam" id="3.30.70.330:FF:000006">
    <property type="entry name" value="ELAV-like 3"/>
    <property type="match status" value="1"/>
</dbReference>
<dbReference type="FunFam" id="3.30.70.330:FF:000005">
    <property type="entry name" value="ELAV-like protein"/>
    <property type="match status" value="1"/>
</dbReference>
<dbReference type="FunFam" id="3.30.70.330:FF:000017">
    <property type="entry name" value="ELAV-like protein"/>
    <property type="match status" value="1"/>
</dbReference>
<dbReference type="Gene3D" id="3.30.70.330">
    <property type="match status" value="3"/>
</dbReference>
<dbReference type="InterPro" id="IPR006548">
    <property type="entry name" value="ELAD_HU_SF"/>
</dbReference>
<dbReference type="InterPro" id="IPR034999">
    <property type="entry name" value="HuB_RRM2"/>
</dbReference>
<dbReference type="InterPro" id="IPR034914">
    <property type="entry name" value="HuB_RRM3"/>
</dbReference>
<dbReference type="InterPro" id="IPR002343">
    <property type="entry name" value="Hud_Sxl_RNA"/>
</dbReference>
<dbReference type="InterPro" id="IPR012677">
    <property type="entry name" value="Nucleotide-bd_a/b_plait_sf"/>
</dbReference>
<dbReference type="InterPro" id="IPR035979">
    <property type="entry name" value="RBD_domain_sf"/>
</dbReference>
<dbReference type="InterPro" id="IPR000504">
    <property type="entry name" value="RRM_dom"/>
</dbReference>
<dbReference type="NCBIfam" id="TIGR01661">
    <property type="entry name" value="ELAV_HUD_SF"/>
    <property type="match status" value="1"/>
</dbReference>
<dbReference type="PANTHER" id="PTHR10352">
    <property type="entry name" value="EUKARYOTIC TRANSLATION INITIATION FACTOR 3 SUBUNIT G"/>
    <property type="match status" value="1"/>
</dbReference>
<dbReference type="Pfam" id="PF00076">
    <property type="entry name" value="RRM_1"/>
    <property type="match status" value="3"/>
</dbReference>
<dbReference type="PRINTS" id="PR00961">
    <property type="entry name" value="HUDSXLRNA"/>
</dbReference>
<dbReference type="SMART" id="SM00360">
    <property type="entry name" value="RRM"/>
    <property type="match status" value="3"/>
</dbReference>
<dbReference type="SUPFAM" id="SSF54928">
    <property type="entry name" value="RNA-binding domain, RBD"/>
    <property type="match status" value="2"/>
</dbReference>
<dbReference type="PROSITE" id="PS50102">
    <property type="entry name" value="RRM"/>
    <property type="match status" value="3"/>
</dbReference>
<organism>
    <name type="scientific">Rattus norvegicus</name>
    <name type="common">Rat</name>
    <dbReference type="NCBI Taxonomy" id="10116"/>
    <lineage>
        <taxon>Eukaryota</taxon>
        <taxon>Metazoa</taxon>
        <taxon>Chordata</taxon>
        <taxon>Craniata</taxon>
        <taxon>Vertebrata</taxon>
        <taxon>Euteleostomi</taxon>
        <taxon>Mammalia</taxon>
        <taxon>Eutheria</taxon>
        <taxon>Euarchontoglires</taxon>
        <taxon>Glires</taxon>
        <taxon>Rodentia</taxon>
        <taxon>Myomorpha</taxon>
        <taxon>Muroidea</taxon>
        <taxon>Muridae</taxon>
        <taxon>Murinae</taxon>
        <taxon>Rattus</taxon>
    </lineage>
</organism>
<protein>
    <recommendedName>
        <fullName>ELAV-like protein 2</fullName>
    </recommendedName>
    <alternativeName>
        <fullName>Hu-antigen B</fullName>
        <shortName>HuB</shortName>
    </alternativeName>
</protein>
<proteinExistence type="evidence at protein level"/>
<feature type="chain" id="PRO_0000232768" description="ELAV-like protein 2">
    <location>
        <begin position="1"/>
        <end position="359"/>
    </location>
</feature>
<feature type="domain" description="RRM 1" evidence="3">
    <location>
        <begin position="39"/>
        <end position="117"/>
    </location>
</feature>
<feature type="domain" description="RRM 2" evidence="3">
    <location>
        <begin position="125"/>
        <end position="205"/>
    </location>
</feature>
<feature type="domain" description="RRM 3" evidence="3">
    <location>
        <begin position="276"/>
        <end position="354"/>
    </location>
</feature>
<feature type="region of interest" description="Disordered" evidence="4">
    <location>
        <begin position="1"/>
        <end position="39"/>
    </location>
</feature>
<feature type="modified residue" description="Phosphoserine" evidence="6">
    <location>
        <position position="221"/>
    </location>
</feature>
<comment type="function">
    <text evidence="2">RNA-binding protein that binds to the 3' untranslated region (3'UTR) of target mRNAs (By similarity). Seems to recognize a GAAA motif (By similarity). Can bind to its own 3'UTR, the FOS 3'UTR and the ID 3'UTR (By similarity).</text>
</comment>
<comment type="subunit">
    <text evidence="1 2">Interacts with IGF2BP1 (By similarity). Interacts with MAP1B light chain LC1 (By similarity).</text>
</comment>
<comment type="similarity">
    <text evidence="5">Belongs to the RRM elav family.</text>
</comment>
<gene>
    <name type="primary">Elavl2</name>
    <name type="synonym">Hub</name>
</gene>
<keyword id="KW-0597">Phosphoprotein</keyword>
<keyword id="KW-1185">Reference proteome</keyword>
<keyword id="KW-0677">Repeat</keyword>
<keyword id="KW-0694">RNA-binding</keyword>